<reference key="1">
    <citation type="journal article" date="1998" name="Mol. Biol. Evol.">
        <title>The 'five-sites' rule and the evolution of red and green color vision in mammals.</title>
        <authorList>
            <person name="Yokoyama S."/>
            <person name="Radlwimmer F.B."/>
        </authorList>
    </citation>
    <scope>NUCLEOTIDE SEQUENCE [MRNA]</scope>
    <scope>BIOPHYSICOCHEMICAL PROPERTIES</scope>
</reference>
<feature type="chain" id="PRO_0000197787" description="Medium-wave-sensitive opsin 1">
    <location>
        <begin position="1" status="less than"/>
        <end position="273" status="greater than"/>
    </location>
</feature>
<feature type="topological domain" description="Extracellular" evidence="4">
    <location>
        <begin position="1" status="less than"/>
        <end position="5"/>
    </location>
</feature>
<feature type="transmembrane region" description="Helical; Name=1" evidence="4">
    <location>
        <begin position="6"/>
        <end position="30"/>
    </location>
</feature>
<feature type="topological domain" description="Cytoplasmic" evidence="4">
    <location>
        <begin position="31"/>
        <end position="42"/>
    </location>
</feature>
<feature type="transmembrane region" description="Helical; Name=2" evidence="4">
    <location>
        <begin position="43"/>
        <end position="68"/>
    </location>
</feature>
<feature type="topological domain" description="Extracellular" evidence="4">
    <location>
        <begin position="69"/>
        <end position="82"/>
    </location>
</feature>
<feature type="transmembrane region" description="Helical; Name=3" evidence="4">
    <location>
        <begin position="83"/>
        <end position="102"/>
    </location>
</feature>
<feature type="topological domain" description="Cytoplasmic" evidence="4">
    <location>
        <begin position="103"/>
        <end position="121"/>
    </location>
</feature>
<feature type="transmembrane region" description="Helical; Name=4" evidence="4">
    <location>
        <begin position="122"/>
        <end position="145"/>
    </location>
</feature>
<feature type="topological domain" description="Extracellular" evidence="4">
    <location>
        <begin position="146"/>
        <end position="171"/>
    </location>
</feature>
<feature type="transmembrane region" description="Helical; Name=5" evidence="4">
    <location>
        <begin position="172"/>
        <end position="199"/>
    </location>
</feature>
<feature type="topological domain" description="Cytoplasmic" evidence="4">
    <location>
        <begin position="200"/>
        <end position="221"/>
    </location>
</feature>
<feature type="transmembrane region" description="Helical; Name=6" evidence="4">
    <location>
        <begin position="222"/>
        <end position="245"/>
    </location>
</feature>
<feature type="topological domain" description="Extracellular" evidence="4">
    <location>
        <begin position="246"/>
        <end position="253"/>
    </location>
</feature>
<feature type="transmembrane region" description="Helical; Name=7" evidence="4">
    <location>
        <begin position="254"/>
        <end position="273"/>
    </location>
</feature>
<feature type="modified residue" description="N6-(retinylidene)lysine" evidence="1">
    <location>
        <position position="265"/>
    </location>
</feature>
<feature type="disulfide bond" evidence="5">
    <location>
        <begin position="79"/>
        <end position="156"/>
    </location>
</feature>
<feature type="non-terminal residue">
    <location>
        <position position="1"/>
    </location>
</feature>
<feature type="non-terminal residue">
    <location>
        <position position="273"/>
    </location>
</feature>
<comment type="function">
    <text>Visual pigments are the light-absorbing molecules that mediate vision. They consist of an apoprotein, opsin, covalently linked to cis-retinal.</text>
</comment>
<comment type="biophysicochemical properties">
    <absorption>
        <max evidence="6">531 nm</max>
    </absorption>
</comment>
<comment type="subunit">
    <text evidence="3">Monomer. Homodimer. Homotetramer.</text>
</comment>
<comment type="subcellular location">
    <subcellularLocation>
        <location>Membrane</location>
        <topology>Multi-pass membrane protein</topology>
    </subcellularLocation>
</comment>
<comment type="tissue specificity">
    <text>The three color pigments are found in the cone photoreceptor cells.</text>
</comment>
<comment type="PTM">
    <text evidence="2">O-glycosylated.</text>
</comment>
<comment type="PTM">
    <text>Phosphorylated on some or all of the serine and threonine residues present in the C-terminal region.</text>
</comment>
<comment type="similarity">
    <text evidence="5">Belongs to the G-protein coupled receptor 1 family. Opsin subfamily.</text>
</comment>
<sequence length="273" mass="30490">APRWVYHLTSAWMVFVVIASVFTNGLVLAATMRFKKLRHPLNWILVNLAIADLVETIIASTISVVNQMYGYFVLGHPLCVVEGYTASLCGITGLWSLAIISWERWMVVCRPFGNVRFDAKLAIAGIAFSWIWAAVWTAPPIFGWSRYWPHGLKTSCGPDVFSGSSYPGVQSYMIVLMITCCFIPLSVIVLCYLQVWLAIRAVAKQQKESESTQKAEKEVTRMVMVMIFAFCLCWGPYAFFACFAAAHPGYAFHPLVAALPAYFAKSATIYNPI</sequence>
<organism>
    <name type="scientific">Odocoileus virginianus virginianus</name>
    <name type="common">Virginia white-tailed deer</name>
    <dbReference type="NCBI Taxonomy" id="9875"/>
    <lineage>
        <taxon>Eukaryota</taxon>
        <taxon>Metazoa</taxon>
        <taxon>Chordata</taxon>
        <taxon>Craniata</taxon>
        <taxon>Vertebrata</taxon>
        <taxon>Euteleostomi</taxon>
        <taxon>Mammalia</taxon>
        <taxon>Eutheria</taxon>
        <taxon>Laurasiatheria</taxon>
        <taxon>Artiodactyla</taxon>
        <taxon>Ruminantia</taxon>
        <taxon>Pecora</taxon>
        <taxon>Cervidae</taxon>
        <taxon>Odocoileinae</taxon>
        <taxon>Odocoileus</taxon>
    </lineage>
</organism>
<protein>
    <recommendedName>
        <fullName>Medium-wave-sensitive opsin 1</fullName>
    </recommendedName>
    <alternativeName>
        <fullName>Green cone photoreceptor pigment</fullName>
    </alternativeName>
    <alternativeName>
        <fullName>Green-sensitive opsin</fullName>
    </alternativeName>
</protein>
<keyword id="KW-0157">Chromophore</keyword>
<keyword id="KW-1015">Disulfide bond</keyword>
<keyword id="KW-0297">G-protein coupled receptor</keyword>
<keyword id="KW-0449">Lipoprotein</keyword>
<keyword id="KW-0472">Membrane</keyword>
<keyword id="KW-0564">Palmitate</keyword>
<keyword id="KW-0597">Phosphoprotein</keyword>
<keyword id="KW-0600">Photoreceptor protein</keyword>
<keyword id="KW-0675">Receptor</keyword>
<keyword id="KW-0681">Retinal protein</keyword>
<keyword id="KW-0716">Sensory transduction</keyword>
<keyword id="KW-0807">Transducer</keyword>
<keyword id="KW-0812">Transmembrane</keyword>
<keyword id="KW-1133">Transmembrane helix</keyword>
<keyword id="KW-0844">Vision</keyword>
<evidence type="ECO:0000250" key="1"/>
<evidence type="ECO:0000250" key="2">
    <source>
        <dbReference type="UniProtKB" id="O35599"/>
    </source>
</evidence>
<evidence type="ECO:0000250" key="3">
    <source>
        <dbReference type="UniProtKB" id="P04001"/>
    </source>
</evidence>
<evidence type="ECO:0000255" key="4"/>
<evidence type="ECO:0000255" key="5">
    <source>
        <dbReference type="PROSITE-ProRule" id="PRU00521"/>
    </source>
</evidence>
<evidence type="ECO:0000269" key="6">
    <source>
    </source>
</evidence>
<gene>
    <name type="primary">OPN1MW</name>
    <name type="synonym">GCP</name>
</gene>
<name>OPSG_ODOVI</name>
<accession>O18911</accession>
<proteinExistence type="evidence at protein level"/>
<dbReference type="EMBL" id="AF031527">
    <property type="protein sequence ID" value="AAB86945.1"/>
    <property type="molecule type" value="mRNA"/>
</dbReference>
<dbReference type="SMR" id="O18911"/>
<dbReference type="GO" id="GO:0005886">
    <property type="term" value="C:plasma membrane"/>
    <property type="evidence" value="ECO:0000250"/>
    <property type="project" value="UniProtKB"/>
</dbReference>
<dbReference type="GO" id="GO:0004930">
    <property type="term" value="F:G protein-coupled receptor activity"/>
    <property type="evidence" value="ECO:0007669"/>
    <property type="project" value="UniProtKB-KW"/>
</dbReference>
<dbReference type="GO" id="GO:0042802">
    <property type="term" value="F:identical protein binding"/>
    <property type="evidence" value="ECO:0000250"/>
    <property type="project" value="UniProtKB"/>
</dbReference>
<dbReference type="GO" id="GO:0009881">
    <property type="term" value="F:photoreceptor activity"/>
    <property type="evidence" value="ECO:0007669"/>
    <property type="project" value="UniProtKB-KW"/>
</dbReference>
<dbReference type="GO" id="GO:0007602">
    <property type="term" value="P:phototransduction"/>
    <property type="evidence" value="ECO:0007669"/>
    <property type="project" value="UniProtKB-KW"/>
</dbReference>
<dbReference type="GO" id="GO:0007601">
    <property type="term" value="P:visual perception"/>
    <property type="evidence" value="ECO:0007669"/>
    <property type="project" value="UniProtKB-KW"/>
</dbReference>
<dbReference type="FunFam" id="1.20.1070.10:FF:000090">
    <property type="entry name" value="Long-wave-sensitive opsin 1"/>
    <property type="match status" value="1"/>
</dbReference>
<dbReference type="Gene3D" id="1.20.1070.10">
    <property type="entry name" value="Rhodopsin 7-helix transmembrane proteins"/>
    <property type="match status" value="1"/>
</dbReference>
<dbReference type="InterPro" id="IPR050125">
    <property type="entry name" value="GPCR_opsins"/>
</dbReference>
<dbReference type="InterPro" id="IPR000276">
    <property type="entry name" value="GPCR_Rhodpsn"/>
</dbReference>
<dbReference type="InterPro" id="IPR017452">
    <property type="entry name" value="GPCR_Rhodpsn_7TM"/>
</dbReference>
<dbReference type="InterPro" id="IPR001760">
    <property type="entry name" value="Opsin"/>
</dbReference>
<dbReference type="InterPro" id="IPR000378">
    <property type="entry name" value="Opsin_red/grn"/>
</dbReference>
<dbReference type="PANTHER" id="PTHR24240">
    <property type="entry name" value="OPSIN"/>
    <property type="match status" value="1"/>
</dbReference>
<dbReference type="Pfam" id="PF00001">
    <property type="entry name" value="7tm_1"/>
    <property type="match status" value="1"/>
</dbReference>
<dbReference type="PRINTS" id="PR00237">
    <property type="entry name" value="GPCRRHODOPSN"/>
</dbReference>
<dbReference type="PRINTS" id="PR00238">
    <property type="entry name" value="OPSIN"/>
</dbReference>
<dbReference type="PRINTS" id="PR00575">
    <property type="entry name" value="OPSINREDGRN"/>
</dbReference>
<dbReference type="SUPFAM" id="SSF81321">
    <property type="entry name" value="Family A G protein-coupled receptor-like"/>
    <property type="match status" value="1"/>
</dbReference>
<dbReference type="PROSITE" id="PS00237">
    <property type="entry name" value="G_PROTEIN_RECEP_F1_1"/>
    <property type="match status" value="1"/>
</dbReference>
<dbReference type="PROSITE" id="PS50262">
    <property type="entry name" value="G_PROTEIN_RECEP_F1_2"/>
    <property type="match status" value="1"/>
</dbReference>